<proteinExistence type="inferred from homology"/>
<sequence>MATSKSGGSSKNGRDSISKRLGVKRSGGQFVRAGEIIIRQRGTKFHKGKNSGLGRDHTIFALKDGIVEFKTSKGRKYINII</sequence>
<comment type="similarity">
    <text evidence="1">Belongs to the bacterial ribosomal protein bL27 family.</text>
</comment>
<organism>
    <name type="scientific">Borrelia duttonii (strain Ly)</name>
    <dbReference type="NCBI Taxonomy" id="412419"/>
    <lineage>
        <taxon>Bacteria</taxon>
        <taxon>Pseudomonadati</taxon>
        <taxon>Spirochaetota</taxon>
        <taxon>Spirochaetia</taxon>
        <taxon>Spirochaetales</taxon>
        <taxon>Borreliaceae</taxon>
        <taxon>Borrelia</taxon>
    </lineage>
</organism>
<accession>B5RMX2</accession>
<gene>
    <name evidence="1" type="primary">rpmA</name>
    <name type="ordered locus">BDU_785</name>
</gene>
<keyword id="KW-0687">Ribonucleoprotein</keyword>
<keyword id="KW-0689">Ribosomal protein</keyword>
<evidence type="ECO:0000255" key="1">
    <source>
        <dbReference type="HAMAP-Rule" id="MF_00539"/>
    </source>
</evidence>
<evidence type="ECO:0000256" key="2">
    <source>
        <dbReference type="SAM" id="MobiDB-lite"/>
    </source>
</evidence>
<evidence type="ECO:0000305" key="3"/>
<protein>
    <recommendedName>
        <fullName evidence="1">Large ribosomal subunit protein bL27</fullName>
    </recommendedName>
    <alternativeName>
        <fullName evidence="3">50S ribosomal protein L27</fullName>
    </alternativeName>
</protein>
<reference key="1">
    <citation type="journal article" date="2008" name="PLoS Genet.">
        <title>The genome of Borrelia recurrentis, the agent of deadly louse-borne relapsing fever, is a degraded subset of tick-borne Borrelia duttonii.</title>
        <authorList>
            <person name="Lescot M."/>
            <person name="Audic S."/>
            <person name="Robert C."/>
            <person name="Nguyen T.T."/>
            <person name="Blanc G."/>
            <person name="Cutler S.J."/>
            <person name="Wincker P."/>
            <person name="Couloux A."/>
            <person name="Claverie J.-M."/>
            <person name="Raoult D."/>
            <person name="Drancourt M."/>
        </authorList>
    </citation>
    <scope>NUCLEOTIDE SEQUENCE [LARGE SCALE GENOMIC DNA]</scope>
    <source>
        <strain>Ly</strain>
    </source>
</reference>
<name>RL27_BORDL</name>
<feature type="chain" id="PRO_1000128699" description="Large ribosomal subunit protein bL27">
    <location>
        <begin position="1"/>
        <end position="81"/>
    </location>
</feature>
<feature type="region of interest" description="Disordered" evidence="2">
    <location>
        <begin position="1"/>
        <end position="24"/>
    </location>
</feature>
<feature type="compositionally biased region" description="Polar residues" evidence="2">
    <location>
        <begin position="1"/>
        <end position="11"/>
    </location>
</feature>
<dbReference type="EMBL" id="CP000976">
    <property type="protein sequence ID" value="ACH93708.1"/>
    <property type="molecule type" value="Genomic_DNA"/>
</dbReference>
<dbReference type="RefSeq" id="WP_012538517.1">
    <property type="nucleotide sequence ID" value="NC_011229.1"/>
</dbReference>
<dbReference type="SMR" id="B5RMX2"/>
<dbReference type="STRING" id="412419.BDU_785"/>
<dbReference type="KEGG" id="bdu:BDU_785"/>
<dbReference type="eggNOG" id="COG0211">
    <property type="taxonomic scope" value="Bacteria"/>
</dbReference>
<dbReference type="HOGENOM" id="CLU_095424_4_1_12"/>
<dbReference type="OrthoDB" id="9803474at2"/>
<dbReference type="Proteomes" id="UP000000611">
    <property type="component" value="Chromosome"/>
</dbReference>
<dbReference type="GO" id="GO:0022625">
    <property type="term" value="C:cytosolic large ribosomal subunit"/>
    <property type="evidence" value="ECO:0007669"/>
    <property type="project" value="TreeGrafter"/>
</dbReference>
<dbReference type="GO" id="GO:0003735">
    <property type="term" value="F:structural constituent of ribosome"/>
    <property type="evidence" value="ECO:0007669"/>
    <property type="project" value="InterPro"/>
</dbReference>
<dbReference type="GO" id="GO:0006412">
    <property type="term" value="P:translation"/>
    <property type="evidence" value="ECO:0007669"/>
    <property type="project" value="UniProtKB-UniRule"/>
</dbReference>
<dbReference type="FunFam" id="2.40.50.100:FF:000020">
    <property type="entry name" value="50S ribosomal protein L27"/>
    <property type="match status" value="1"/>
</dbReference>
<dbReference type="Gene3D" id="2.40.50.100">
    <property type="match status" value="1"/>
</dbReference>
<dbReference type="HAMAP" id="MF_00539">
    <property type="entry name" value="Ribosomal_bL27"/>
    <property type="match status" value="1"/>
</dbReference>
<dbReference type="InterPro" id="IPR001684">
    <property type="entry name" value="Ribosomal_bL27"/>
</dbReference>
<dbReference type="InterPro" id="IPR018261">
    <property type="entry name" value="Ribosomal_bL27_CS"/>
</dbReference>
<dbReference type="NCBIfam" id="TIGR00062">
    <property type="entry name" value="L27"/>
    <property type="match status" value="1"/>
</dbReference>
<dbReference type="PANTHER" id="PTHR15893:SF0">
    <property type="entry name" value="LARGE RIBOSOMAL SUBUNIT PROTEIN BL27M"/>
    <property type="match status" value="1"/>
</dbReference>
<dbReference type="PANTHER" id="PTHR15893">
    <property type="entry name" value="RIBOSOMAL PROTEIN L27"/>
    <property type="match status" value="1"/>
</dbReference>
<dbReference type="Pfam" id="PF01016">
    <property type="entry name" value="Ribosomal_L27"/>
    <property type="match status" value="1"/>
</dbReference>
<dbReference type="PRINTS" id="PR00063">
    <property type="entry name" value="RIBOSOMALL27"/>
</dbReference>
<dbReference type="SUPFAM" id="SSF110324">
    <property type="entry name" value="Ribosomal L27 protein-like"/>
    <property type="match status" value="1"/>
</dbReference>
<dbReference type="PROSITE" id="PS00831">
    <property type="entry name" value="RIBOSOMAL_L27"/>
    <property type="match status" value="1"/>
</dbReference>